<keyword id="KW-0067">ATP-binding</keyword>
<keyword id="KW-0963">Cytoplasm</keyword>
<keyword id="KW-1015">Disulfide bond</keyword>
<keyword id="KW-0547">Nucleotide-binding</keyword>
<keyword id="KW-1185">Reference proteome</keyword>
<keyword id="KW-0694">RNA-binding</keyword>
<keyword id="KW-0808">Transferase</keyword>
<keyword id="KW-0819">tRNA processing</keyword>
<keyword id="KW-0820">tRNA-binding</keyword>
<accession>B2TZ86</accession>
<evidence type="ECO:0000255" key="1">
    <source>
        <dbReference type="HAMAP-Rule" id="MF_00144"/>
    </source>
</evidence>
<feature type="chain" id="PRO_0000349795" description="tRNA-specific 2-thiouridylase MnmA">
    <location>
        <begin position="1"/>
        <end position="368"/>
    </location>
</feature>
<feature type="region of interest" description="Interaction with target base in tRNA" evidence="1">
    <location>
        <begin position="97"/>
        <end position="99"/>
    </location>
</feature>
<feature type="region of interest" description="Interaction with tRNA" evidence="1">
    <location>
        <begin position="149"/>
        <end position="151"/>
    </location>
</feature>
<feature type="region of interest" description="Interaction with tRNA" evidence="1">
    <location>
        <begin position="311"/>
        <end position="312"/>
    </location>
</feature>
<feature type="active site" description="Nucleophile" evidence="1">
    <location>
        <position position="102"/>
    </location>
</feature>
<feature type="active site" description="Cysteine persulfide intermediate" evidence="1">
    <location>
        <position position="199"/>
    </location>
</feature>
<feature type="binding site" evidence="1">
    <location>
        <begin position="11"/>
        <end position="18"/>
    </location>
    <ligand>
        <name>ATP</name>
        <dbReference type="ChEBI" id="CHEBI:30616"/>
    </ligand>
</feature>
<feature type="binding site" evidence="1">
    <location>
        <position position="37"/>
    </location>
    <ligand>
        <name>ATP</name>
        <dbReference type="ChEBI" id="CHEBI:30616"/>
    </ligand>
</feature>
<feature type="binding site" evidence="1">
    <location>
        <position position="127"/>
    </location>
    <ligand>
        <name>ATP</name>
        <dbReference type="ChEBI" id="CHEBI:30616"/>
    </ligand>
</feature>
<feature type="site" description="Interaction with tRNA" evidence="1">
    <location>
        <position position="128"/>
    </location>
</feature>
<feature type="site" description="Interaction with tRNA" evidence="1">
    <location>
        <position position="344"/>
    </location>
</feature>
<feature type="disulfide bond" description="Alternate" evidence="1">
    <location>
        <begin position="102"/>
        <end position="199"/>
    </location>
</feature>
<name>MNMA_SHIB3</name>
<comment type="function">
    <text evidence="1">Catalyzes the 2-thiolation of uridine at the wobble position (U34) of tRNA(Lys), tRNA(Glu) and tRNA(Gln), leading to the formation of s(2)U34, the first step of tRNA-mnm(5)s(2)U34 synthesis. Sulfur is provided by IscS, via a sulfur-relay system. Binds ATP and its substrate tRNAs.</text>
</comment>
<comment type="catalytic activity">
    <reaction evidence="1">
        <text>S-sulfanyl-L-cysteinyl-[protein] + uridine(34) in tRNA + AH2 + ATP = 2-thiouridine(34) in tRNA + L-cysteinyl-[protein] + A + AMP + diphosphate + H(+)</text>
        <dbReference type="Rhea" id="RHEA:47032"/>
        <dbReference type="Rhea" id="RHEA-COMP:10131"/>
        <dbReference type="Rhea" id="RHEA-COMP:11726"/>
        <dbReference type="Rhea" id="RHEA-COMP:11727"/>
        <dbReference type="Rhea" id="RHEA-COMP:11728"/>
        <dbReference type="ChEBI" id="CHEBI:13193"/>
        <dbReference type="ChEBI" id="CHEBI:15378"/>
        <dbReference type="ChEBI" id="CHEBI:17499"/>
        <dbReference type="ChEBI" id="CHEBI:29950"/>
        <dbReference type="ChEBI" id="CHEBI:30616"/>
        <dbReference type="ChEBI" id="CHEBI:33019"/>
        <dbReference type="ChEBI" id="CHEBI:61963"/>
        <dbReference type="ChEBI" id="CHEBI:65315"/>
        <dbReference type="ChEBI" id="CHEBI:87170"/>
        <dbReference type="ChEBI" id="CHEBI:456215"/>
        <dbReference type="EC" id="2.8.1.13"/>
    </reaction>
</comment>
<comment type="subunit">
    <text evidence="1">Interacts with TusE.</text>
</comment>
<comment type="subcellular location">
    <subcellularLocation>
        <location evidence="1">Cytoplasm</location>
    </subcellularLocation>
</comment>
<comment type="similarity">
    <text evidence="1">Belongs to the MnmA/TRMU family.</text>
</comment>
<proteinExistence type="inferred from homology"/>
<reference key="1">
    <citation type="submission" date="2008-05" db="EMBL/GenBank/DDBJ databases">
        <title>Complete sequence of Shigella boydii serotype 18 strain BS512.</title>
        <authorList>
            <person name="Rasko D.A."/>
            <person name="Rosovitz M."/>
            <person name="Maurelli A.T."/>
            <person name="Myers G."/>
            <person name="Seshadri R."/>
            <person name="Cer R."/>
            <person name="Jiang L."/>
            <person name="Ravel J."/>
            <person name="Sebastian Y."/>
        </authorList>
    </citation>
    <scope>NUCLEOTIDE SEQUENCE [LARGE SCALE GENOMIC DNA]</scope>
    <source>
        <strain>CDC 3083-94 / BS512</strain>
    </source>
</reference>
<dbReference type="EC" id="2.8.1.13" evidence="1"/>
<dbReference type="EMBL" id="CP001063">
    <property type="protein sequence ID" value="ACD07108.1"/>
    <property type="molecule type" value="Genomic_DNA"/>
</dbReference>
<dbReference type="RefSeq" id="WP_001378857.1">
    <property type="nucleotide sequence ID" value="NC_010658.1"/>
</dbReference>
<dbReference type="SMR" id="B2TZ86"/>
<dbReference type="STRING" id="344609.SbBS512_E1311"/>
<dbReference type="KEGG" id="sbc:SbBS512_E1311"/>
<dbReference type="HOGENOM" id="CLU_035188_1_0_6"/>
<dbReference type="Proteomes" id="UP000001030">
    <property type="component" value="Chromosome"/>
</dbReference>
<dbReference type="GO" id="GO:0005737">
    <property type="term" value="C:cytoplasm"/>
    <property type="evidence" value="ECO:0007669"/>
    <property type="project" value="UniProtKB-SubCell"/>
</dbReference>
<dbReference type="GO" id="GO:0005524">
    <property type="term" value="F:ATP binding"/>
    <property type="evidence" value="ECO:0007669"/>
    <property type="project" value="UniProtKB-KW"/>
</dbReference>
<dbReference type="GO" id="GO:0000049">
    <property type="term" value="F:tRNA binding"/>
    <property type="evidence" value="ECO:0007669"/>
    <property type="project" value="UniProtKB-KW"/>
</dbReference>
<dbReference type="GO" id="GO:0103016">
    <property type="term" value="F:tRNA-uridine 2-sulfurtransferase activity"/>
    <property type="evidence" value="ECO:0007669"/>
    <property type="project" value="UniProtKB-EC"/>
</dbReference>
<dbReference type="GO" id="GO:0002143">
    <property type="term" value="P:tRNA wobble position uridine thiolation"/>
    <property type="evidence" value="ECO:0007669"/>
    <property type="project" value="TreeGrafter"/>
</dbReference>
<dbReference type="CDD" id="cd01998">
    <property type="entry name" value="MnmA_TRMU-like"/>
    <property type="match status" value="1"/>
</dbReference>
<dbReference type="FunFam" id="2.30.30.280:FF:000001">
    <property type="entry name" value="tRNA-specific 2-thiouridylase MnmA"/>
    <property type="match status" value="1"/>
</dbReference>
<dbReference type="FunFam" id="2.40.30.10:FF:000023">
    <property type="entry name" value="tRNA-specific 2-thiouridylase MnmA"/>
    <property type="match status" value="1"/>
</dbReference>
<dbReference type="FunFam" id="3.40.50.620:FF:000004">
    <property type="entry name" value="tRNA-specific 2-thiouridylase MnmA"/>
    <property type="match status" value="1"/>
</dbReference>
<dbReference type="Gene3D" id="2.30.30.280">
    <property type="entry name" value="Adenine nucleotide alpha hydrolases-like domains"/>
    <property type="match status" value="1"/>
</dbReference>
<dbReference type="Gene3D" id="3.40.50.620">
    <property type="entry name" value="HUPs"/>
    <property type="match status" value="1"/>
</dbReference>
<dbReference type="Gene3D" id="2.40.30.10">
    <property type="entry name" value="Translation factors"/>
    <property type="match status" value="1"/>
</dbReference>
<dbReference type="HAMAP" id="MF_00144">
    <property type="entry name" value="tRNA_thiouridyl_MnmA"/>
    <property type="match status" value="1"/>
</dbReference>
<dbReference type="InterPro" id="IPR004506">
    <property type="entry name" value="MnmA-like"/>
</dbReference>
<dbReference type="InterPro" id="IPR046885">
    <property type="entry name" value="MnmA-like_C"/>
</dbReference>
<dbReference type="InterPro" id="IPR046884">
    <property type="entry name" value="MnmA-like_central"/>
</dbReference>
<dbReference type="InterPro" id="IPR023382">
    <property type="entry name" value="MnmA-like_central_sf"/>
</dbReference>
<dbReference type="InterPro" id="IPR014729">
    <property type="entry name" value="Rossmann-like_a/b/a_fold"/>
</dbReference>
<dbReference type="NCBIfam" id="NF001138">
    <property type="entry name" value="PRK00143.1"/>
    <property type="match status" value="1"/>
</dbReference>
<dbReference type="NCBIfam" id="TIGR00420">
    <property type="entry name" value="trmU"/>
    <property type="match status" value="1"/>
</dbReference>
<dbReference type="PANTHER" id="PTHR11933:SF5">
    <property type="entry name" value="MITOCHONDRIAL TRNA-SPECIFIC 2-THIOURIDYLASE 1"/>
    <property type="match status" value="1"/>
</dbReference>
<dbReference type="PANTHER" id="PTHR11933">
    <property type="entry name" value="TRNA 5-METHYLAMINOMETHYL-2-THIOURIDYLATE -METHYLTRANSFERASE"/>
    <property type="match status" value="1"/>
</dbReference>
<dbReference type="Pfam" id="PF03054">
    <property type="entry name" value="tRNA_Me_trans"/>
    <property type="match status" value="1"/>
</dbReference>
<dbReference type="Pfam" id="PF20258">
    <property type="entry name" value="tRNA_Me_trans_C"/>
    <property type="match status" value="1"/>
</dbReference>
<dbReference type="Pfam" id="PF20259">
    <property type="entry name" value="tRNA_Me_trans_M"/>
    <property type="match status" value="1"/>
</dbReference>
<dbReference type="SUPFAM" id="SSF52402">
    <property type="entry name" value="Adenine nucleotide alpha hydrolases-like"/>
    <property type="match status" value="1"/>
</dbReference>
<gene>
    <name evidence="1" type="primary">mnmA</name>
    <name type="ordered locus">SbBS512_E1311</name>
</gene>
<organism>
    <name type="scientific">Shigella boydii serotype 18 (strain CDC 3083-94 / BS512)</name>
    <dbReference type="NCBI Taxonomy" id="344609"/>
    <lineage>
        <taxon>Bacteria</taxon>
        <taxon>Pseudomonadati</taxon>
        <taxon>Pseudomonadota</taxon>
        <taxon>Gammaproteobacteria</taxon>
        <taxon>Enterobacterales</taxon>
        <taxon>Enterobacteriaceae</taxon>
        <taxon>Shigella</taxon>
    </lineage>
</organism>
<sequence length="368" mass="40958">MSETAKKVIVGMSGGVDSSVSAWLLQQQGYQVEGLFMKNWEEDDGEEYCTAAADLADAQAVCDKLGIELHTVNFAAEYWNNVFELFLAEYKAGRTPNPDILCNKEIKFKAFLEFAAEDLGADYIATGHYVRRADVDGKSRLLRGLDSNKDQSYFLYTLSHEQIAQSLFPVGELEKPQVRKIAEDLGLVTAKKKDSTGICFIGERKFREFLGRYLPAQPGKIITVDGDEIGEHQGLMYHTLGQRKGLGIGGTKEGTEEPWYVVDKDVENNILVVAQGHEHPRLMSVGLIAQQLHWVDREPFTGTMRCTVKTRYRQTDIPCTVKALDDDRIEVIFDEPVAAVTPGQSAVFYNGEVCLGGGIIEQRLPLPV</sequence>
<protein>
    <recommendedName>
        <fullName evidence="1">tRNA-specific 2-thiouridylase MnmA</fullName>
        <ecNumber evidence="1">2.8.1.13</ecNumber>
    </recommendedName>
</protein>